<dbReference type="EMBL" id="V00342">
    <property type="protein sequence ID" value="CAA23630.1"/>
    <property type="molecule type" value="Genomic_DNA"/>
</dbReference>
<dbReference type="EMBL" id="V00352">
    <property type="protein sequence ID" value="CAA23644.1"/>
    <property type="molecule type" value="Genomic_DNA"/>
</dbReference>
<dbReference type="EMBL" id="U00096">
    <property type="protein sequence ID" value="AAC73997.1"/>
    <property type="molecule type" value="Genomic_DNA"/>
</dbReference>
<dbReference type="EMBL" id="AP009048">
    <property type="protein sequence ID" value="BAA35655.1"/>
    <property type="molecule type" value="Genomic_DNA"/>
</dbReference>
<dbReference type="EMBL" id="X00785">
    <property type="protein sequence ID" value="CAA25361.1"/>
    <property type="molecule type" value="Genomic_DNA"/>
</dbReference>
<dbReference type="EMBL" id="X04864">
    <property type="protein sequence ID" value="CAA28556.1"/>
    <property type="molecule type" value="Genomic_DNA"/>
</dbReference>
<dbReference type="PIR" id="F64830">
    <property type="entry name" value="R3EC1"/>
</dbReference>
<dbReference type="RefSeq" id="NP_415431.1">
    <property type="nucleotide sequence ID" value="NC_000913.3"/>
</dbReference>
<dbReference type="RefSeq" id="WP_000140327.1">
    <property type="nucleotide sequence ID" value="NZ_STEB01000006.1"/>
</dbReference>
<dbReference type="PDB" id="2BH8">
    <property type="method" value="X-ray"/>
    <property type="resolution" value="1.90 A"/>
    <property type="chains" value="A/B=364-398"/>
</dbReference>
<dbReference type="PDB" id="2KHI">
    <property type="method" value="NMR"/>
    <property type="chains" value="A=267-361"/>
</dbReference>
<dbReference type="PDB" id="2KHJ">
    <property type="method" value="NMR"/>
    <property type="chains" value="A=441-528"/>
</dbReference>
<dbReference type="PDB" id="4Q7J">
    <property type="method" value="X-ray"/>
    <property type="resolution" value="2.90 A"/>
    <property type="chains" value="D/H=1-273"/>
</dbReference>
<dbReference type="PDB" id="4R71">
    <property type="method" value="X-ray"/>
    <property type="resolution" value="3.21 A"/>
    <property type="chains" value="E/F=2-171"/>
</dbReference>
<dbReference type="PDB" id="5XQ5">
    <property type="method" value="NMR"/>
    <property type="chains" value="A=350-443"/>
</dbReference>
<dbReference type="PDB" id="6BU8">
    <property type="method" value="EM"/>
    <property type="resolution" value="3.50 A"/>
    <property type="chains" value="Z=4-557"/>
</dbReference>
<dbReference type="PDB" id="6H4N">
    <property type="method" value="EM"/>
    <property type="resolution" value="3.00 A"/>
    <property type="chains" value="y=1-557"/>
</dbReference>
<dbReference type="PDB" id="6H58">
    <property type="method" value="EM"/>
    <property type="resolution" value="7.90 A"/>
    <property type="chains" value="y/yy=1-557"/>
</dbReference>
<dbReference type="PDB" id="6VU3">
    <property type="method" value="EM"/>
    <property type="resolution" value="3.70 A"/>
    <property type="chains" value="H=1-557"/>
</dbReference>
<dbReference type="PDB" id="6VYQ">
    <property type="method" value="EM"/>
    <property type="resolution" value="3.70 A"/>
    <property type="chains" value="H=1-557"/>
</dbReference>
<dbReference type="PDB" id="6VYR">
    <property type="method" value="EM"/>
    <property type="resolution" value="3.80 A"/>
    <property type="chains" value="H=1-557"/>
</dbReference>
<dbReference type="PDB" id="6VYS">
    <property type="method" value="EM"/>
    <property type="resolution" value="3.70 A"/>
    <property type="chains" value="H=1-557"/>
</dbReference>
<dbReference type="PDB" id="6VYT">
    <property type="method" value="EM"/>
    <property type="resolution" value="14.00 A"/>
    <property type="chains" value="H=1-557"/>
</dbReference>
<dbReference type="PDB" id="6VYU">
    <property type="method" value="EM"/>
    <property type="resolution" value="7.00 A"/>
    <property type="chains" value="H=1-557"/>
</dbReference>
<dbReference type="PDB" id="6VYW">
    <property type="method" value="EM"/>
    <property type="resolution" value="7.00 A"/>
    <property type="chains" value="H=1-557"/>
</dbReference>
<dbReference type="PDB" id="6VYX">
    <property type="method" value="EM"/>
    <property type="resolution" value="9.90 A"/>
    <property type="chains" value="H=1-557"/>
</dbReference>
<dbReference type="PDB" id="6VYY">
    <property type="method" value="EM"/>
    <property type="resolution" value="9.90 A"/>
    <property type="chains" value="H=1-557"/>
</dbReference>
<dbReference type="PDB" id="6VYZ">
    <property type="method" value="EM"/>
    <property type="resolution" value="9.90 A"/>
    <property type="chains" value="H=1-557"/>
</dbReference>
<dbReference type="PDB" id="6VZ2">
    <property type="method" value="EM"/>
    <property type="resolution" value="10.00 A"/>
    <property type="chains" value="H=1-557"/>
</dbReference>
<dbReference type="PDB" id="6VZ3">
    <property type="method" value="EM"/>
    <property type="resolution" value="8.90 A"/>
    <property type="chains" value="H=3-348"/>
</dbReference>
<dbReference type="PDB" id="6VZ5">
    <property type="method" value="EM"/>
    <property type="resolution" value="8.90 A"/>
    <property type="chains" value="H=1-557"/>
</dbReference>
<dbReference type="PDB" id="6VZ7">
    <property type="method" value="EM"/>
    <property type="resolution" value="7.00 A"/>
    <property type="chains" value="H=1-557"/>
</dbReference>
<dbReference type="PDB" id="6VZJ">
    <property type="method" value="EM"/>
    <property type="resolution" value="4.10 A"/>
    <property type="chains" value="H=1-557"/>
</dbReference>
<dbReference type="PDB" id="6X6T">
    <property type="method" value="EM"/>
    <property type="resolution" value="3.20 A"/>
    <property type="chains" value="H=1-557"/>
</dbReference>
<dbReference type="PDB" id="6X7F">
    <property type="method" value="EM"/>
    <property type="resolution" value="3.50 A"/>
    <property type="chains" value="H=1-557"/>
</dbReference>
<dbReference type="PDB" id="6X7K">
    <property type="method" value="EM"/>
    <property type="resolution" value="3.10 A"/>
    <property type="chains" value="H=1-557"/>
</dbReference>
<dbReference type="PDB" id="6X9Q">
    <property type="method" value="EM"/>
    <property type="resolution" value="4.80 A"/>
    <property type="chains" value="H=1-557"/>
</dbReference>
<dbReference type="PDB" id="6XDQ">
    <property type="method" value="EM"/>
    <property type="resolution" value="3.70 A"/>
    <property type="chains" value="H=1-557"/>
</dbReference>
<dbReference type="PDB" id="6XDR">
    <property type="method" value="EM"/>
    <property type="resolution" value="4.70 A"/>
    <property type="chains" value="H=1-557"/>
</dbReference>
<dbReference type="PDB" id="6XGF">
    <property type="method" value="EM"/>
    <property type="resolution" value="5.00 A"/>
    <property type="chains" value="H=1-557"/>
</dbReference>
<dbReference type="PDB" id="6XII">
    <property type="method" value="EM"/>
    <property type="resolution" value="7.00 A"/>
    <property type="chains" value="H=1-557"/>
</dbReference>
<dbReference type="PDB" id="6XIJ">
    <property type="method" value="EM"/>
    <property type="resolution" value="8.00 A"/>
    <property type="chains" value="H=1-557"/>
</dbReference>
<dbReference type="PDB" id="6ZTJ">
    <property type="method" value="EM"/>
    <property type="resolution" value="3.40 A"/>
    <property type="chains" value="AY=1-557"/>
</dbReference>
<dbReference type="PDB" id="7QGH">
    <property type="method" value="EM"/>
    <property type="resolution" value="4.48 A"/>
    <property type="chains" value="t=1-557"/>
</dbReference>
<dbReference type="PDB" id="7QGR">
    <property type="method" value="EM"/>
    <property type="resolution" value="5.70 A"/>
    <property type="chains" value="t=1-557"/>
</dbReference>
<dbReference type="PDB" id="8A3L">
    <property type="method" value="EM"/>
    <property type="resolution" value="3.42 A"/>
    <property type="chains" value="Y=1-557"/>
</dbReference>
<dbReference type="PDB" id="8PEG">
    <property type="method" value="EM"/>
    <property type="resolution" value="3.30 A"/>
    <property type="chains" value="Z=1-557"/>
</dbReference>
<dbReference type="PDB" id="8R3V">
    <property type="method" value="EM"/>
    <property type="resolution" value="3.28 A"/>
    <property type="chains" value="Z1=1-557"/>
</dbReference>
<dbReference type="PDB" id="8RCL">
    <property type="method" value="EM"/>
    <property type="resolution" value="3.49 A"/>
    <property type="chains" value="Z1=1-557"/>
</dbReference>
<dbReference type="PDB" id="8RCM">
    <property type="method" value="EM"/>
    <property type="resolution" value="3.59 A"/>
    <property type="chains" value="Z1=1-557"/>
</dbReference>
<dbReference type="PDB" id="8RCS">
    <property type="method" value="EM"/>
    <property type="resolution" value="4.46 A"/>
    <property type="chains" value="Z1=1-557"/>
</dbReference>
<dbReference type="PDB" id="8RCT">
    <property type="method" value="EM"/>
    <property type="resolution" value="5.32 A"/>
    <property type="chains" value="Z1=1-557"/>
</dbReference>
<dbReference type="PDB" id="8UPO">
    <property type="method" value="EM"/>
    <property type="resolution" value="5.50 A"/>
    <property type="chains" value="H=1-557"/>
</dbReference>
<dbReference type="PDB" id="8UPR">
    <property type="method" value="EM"/>
    <property type="resolution" value="5.30 A"/>
    <property type="chains" value="H=1-557"/>
</dbReference>
<dbReference type="PDB" id="8UQL">
    <property type="method" value="EM"/>
    <property type="resolution" value="3.20 A"/>
    <property type="chains" value="H=1-557"/>
</dbReference>
<dbReference type="PDB" id="8UQM">
    <property type="method" value="EM"/>
    <property type="resolution" value="5.30 A"/>
    <property type="chains" value="H=1-557"/>
</dbReference>
<dbReference type="PDB" id="8UQP">
    <property type="method" value="EM"/>
    <property type="resolution" value="3.80 A"/>
    <property type="chains" value="H=1-557"/>
</dbReference>
<dbReference type="PDB" id="8UR0">
    <property type="method" value="EM"/>
    <property type="resolution" value="3.40 A"/>
    <property type="chains" value="H=1-557"/>
</dbReference>
<dbReference type="PDB" id="8URH">
    <property type="method" value="EM"/>
    <property type="resolution" value="5.70 A"/>
    <property type="chains" value="H=1-557"/>
</dbReference>
<dbReference type="PDB" id="8URI">
    <property type="method" value="EM"/>
    <property type="resolution" value="5.30 A"/>
    <property type="chains" value="H=1-557"/>
</dbReference>
<dbReference type="PDB" id="8URX">
    <property type="method" value="EM"/>
    <property type="resolution" value="6.60 A"/>
    <property type="chains" value="H=1-557"/>
</dbReference>
<dbReference type="PDB" id="8URY">
    <property type="method" value="EM"/>
    <property type="resolution" value="3.10 A"/>
    <property type="chains" value="H=1-557"/>
</dbReference>
<dbReference type="PDB" id="9GUP">
    <property type="method" value="EM"/>
    <property type="resolution" value="2.80 A"/>
    <property type="chains" value="B=1-557"/>
</dbReference>
<dbReference type="PDB" id="9GUQ">
    <property type="method" value="EM"/>
    <property type="resolution" value="3.10 A"/>
    <property type="chains" value="B=1-557"/>
</dbReference>
<dbReference type="PDB" id="9GUS">
    <property type="method" value="EM"/>
    <property type="resolution" value="3.50 A"/>
    <property type="chains" value="B=1-557"/>
</dbReference>
<dbReference type="PDB" id="9GUT">
    <property type="method" value="EM"/>
    <property type="resolution" value="2.80 A"/>
    <property type="chains" value="B=1-557"/>
</dbReference>
<dbReference type="PDB" id="9GUU">
    <property type="method" value="EM"/>
    <property type="resolution" value="2.50 A"/>
    <property type="chains" value="B=1-557"/>
</dbReference>
<dbReference type="PDB" id="9GUV">
    <property type="method" value="EM"/>
    <property type="resolution" value="3.00 A"/>
    <property type="chains" value="B=1-557"/>
</dbReference>
<dbReference type="PDB" id="9GUW">
    <property type="method" value="EM"/>
    <property type="resolution" value="3.10 A"/>
    <property type="chains" value="B=1-557"/>
</dbReference>
<dbReference type="PDB" id="9GUX">
    <property type="method" value="EM"/>
    <property type="resolution" value="3.30 A"/>
    <property type="chains" value="B=1-557"/>
</dbReference>
<dbReference type="PDBsum" id="2BH8"/>
<dbReference type="PDBsum" id="2KHI"/>
<dbReference type="PDBsum" id="2KHJ"/>
<dbReference type="PDBsum" id="4Q7J"/>
<dbReference type="PDBsum" id="4R71"/>
<dbReference type="PDBsum" id="5XQ5"/>
<dbReference type="PDBsum" id="6BU8"/>
<dbReference type="PDBsum" id="6H4N"/>
<dbReference type="PDBsum" id="6H58"/>
<dbReference type="PDBsum" id="6VU3"/>
<dbReference type="PDBsum" id="6VYQ"/>
<dbReference type="PDBsum" id="6VYR"/>
<dbReference type="PDBsum" id="6VYS"/>
<dbReference type="PDBsum" id="6VYT"/>
<dbReference type="PDBsum" id="6VYU"/>
<dbReference type="PDBsum" id="6VYW"/>
<dbReference type="PDBsum" id="6VYX"/>
<dbReference type="PDBsum" id="6VYY"/>
<dbReference type="PDBsum" id="6VYZ"/>
<dbReference type="PDBsum" id="6VZ2"/>
<dbReference type="PDBsum" id="6VZ3"/>
<dbReference type="PDBsum" id="6VZ5"/>
<dbReference type="PDBsum" id="6VZ7"/>
<dbReference type="PDBsum" id="6VZJ"/>
<dbReference type="PDBsum" id="6X6T"/>
<dbReference type="PDBsum" id="6X7F"/>
<dbReference type="PDBsum" id="6X7K"/>
<dbReference type="PDBsum" id="6X9Q"/>
<dbReference type="PDBsum" id="6XDQ"/>
<dbReference type="PDBsum" id="6XDR"/>
<dbReference type="PDBsum" id="6XGF"/>
<dbReference type="PDBsum" id="6XII"/>
<dbReference type="PDBsum" id="6XIJ"/>
<dbReference type="PDBsum" id="6ZTJ"/>
<dbReference type="PDBsum" id="7QGH"/>
<dbReference type="PDBsum" id="7QGR"/>
<dbReference type="PDBsum" id="8A3L"/>
<dbReference type="PDBsum" id="8PEG"/>
<dbReference type="PDBsum" id="8R3V"/>
<dbReference type="PDBsum" id="8RCL"/>
<dbReference type="PDBsum" id="8RCM"/>
<dbReference type="PDBsum" id="8RCS"/>
<dbReference type="PDBsum" id="8RCT"/>
<dbReference type="PDBsum" id="8UPO"/>
<dbReference type="PDBsum" id="8UPR"/>
<dbReference type="PDBsum" id="8UQL"/>
<dbReference type="PDBsum" id="8UQM"/>
<dbReference type="PDBsum" id="8UQP"/>
<dbReference type="PDBsum" id="8UR0"/>
<dbReference type="PDBsum" id="8URH"/>
<dbReference type="PDBsum" id="8URI"/>
<dbReference type="PDBsum" id="8URX"/>
<dbReference type="PDBsum" id="8URY"/>
<dbReference type="PDBsum" id="9GUP"/>
<dbReference type="PDBsum" id="9GUQ"/>
<dbReference type="PDBsum" id="9GUS"/>
<dbReference type="PDBsum" id="9GUT"/>
<dbReference type="PDBsum" id="9GUU"/>
<dbReference type="PDBsum" id="9GUV"/>
<dbReference type="PDBsum" id="9GUW"/>
<dbReference type="PDBsum" id="9GUX"/>
<dbReference type="BMRB" id="P0AG67"/>
<dbReference type="EMDB" id="EMD-0137"/>
<dbReference type="EMDB" id="EMD-0139"/>
<dbReference type="EMDB" id="EMD-11418"/>
<dbReference type="EMDB" id="EMD-13955"/>
<dbReference type="EMDB" id="EMD-15116"/>
<dbReference type="EMDB" id="EMD-17631"/>
<dbReference type="EMDB" id="EMD-18875"/>
<dbReference type="EMDB" id="EMD-19054"/>
<dbReference type="EMDB" id="EMD-19055"/>
<dbReference type="EMDB" id="EMD-19058"/>
<dbReference type="EMDB" id="EMD-19059"/>
<dbReference type="EMDB" id="EMD-51615"/>
<dbReference type="EMDB" id="EMD-51616"/>
<dbReference type="EMDB" id="EMD-51618"/>
<dbReference type="EMDB" id="EMD-51619"/>
<dbReference type="EMDB" id="EMD-51620"/>
<dbReference type="EMDB" id="EMD-51621"/>
<dbReference type="EMDB" id="EMD-51622"/>
<dbReference type="EMDB" id="EMD-51623"/>
<dbReference type="EMDB" id="EMD-7289"/>
<dbReference type="SMR" id="P0AG67"/>
<dbReference type="BioGRID" id="4263060">
    <property type="interactions" value="207"/>
</dbReference>
<dbReference type="BioGRID" id="849910">
    <property type="interactions" value="5"/>
</dbReference>
<dbReference type="ComplexPortal" id="CPX-3802">
    <property type="entry name" value="30S small ribosomal subunit"/>
</dbReference>
<dbReference type="DIP" id="DIP-35884N"/>
<dbReference type="FunCoup" id="P0AG67">
    <property type="interactions" value="908"/>
</dbReference>
<dbReference type="IntAct" id="P0AG67">
    <property type="interactions" value="87"/>
</dbReference>
<dbReference type="MINT" id="P0AG67"/>
<dbReference type="STRING" id="511145.b0911"/>
<dbReference type="CarbonylDB" id="P0AG67"/>
<dbReference type="iPTMnet" id="P0AG67"/>
<dbReference type="jPOST" id="P0AG67"/>
<dbReference type="PaxDb" id="511145-b0911"/>
<dbReference type="EnsemblBacteria" id="AAC73997">
    <property type="protein sequence ID" value="AAC73997"/>
    <property type="gene ID" value="b0911"/>
</dbReference>
<dbReference type="GeneID" id="93776506"/>
<dbReference type="GeneID" id="945536"/>
<dbReference type="KEGG" id="ecj:JW0894"/>
<dbReference type="KEGG" id="eco:b0911"/>
<dbReference type="KEGG" id="ecoc:C3026_05615"/>
<dbReference type="PATRIC" id="fig|1411691.4.peg.1365"/>
<dbReference type="EchoBASE" id="EB0893"/>
<dbReference type="eggNOG" id="COG0539">
    <property type="taxonomic scope" value="Bacteria"/>
</dbReference>
<dbReference type="HOGENOM" id="CLU_015805_2_1_6"/>
<dbReference type="InParanoid" id="P0AG67"/>
<dbReference type="OMA" id="ISWDKNV"/>
<dbReference type="OrthoDB" id="9804077at2"/>
<dbReference type="PhylomeDB" id="P0AG67"/>
<dbReference type="BioCyc" id="EcoCyc:EG10900-MONOMER"/>
<dbReference type="BioCyc" id="MetaCyc:EG10900-MONOMER"/>
<dbReference type="EvolutionaryTrace" id="P0AG67"/>
<dbReference type="PRO" id="PR:P0AG67"/>
<dbReference type="Proteomes" id="UP000000625">
    <property type="component" value="Chromosome"/>
</dbReference>
<dbReference type="GO" id="GO:0005737">
    <property type="term" value="C:cytoplasm"/>
    <property type="evidence" value="ECO:0000314"/>
    <property type="project" value="ComplexPortal"/>
</dbReference>
<dbReference type="GO" id="GO:0022627">
    <property type="term" value="C:cytosolic small ribosomal subunit"/>
    <property type="evidence" value="ECO:0000314"/>
    <property type="project" value="CAFA"/>
</dbReference>
<dbReference type="GO" id="GO:0016020">
    <property type="term" value="C:membrane"/>
    <property type="evidence" value="ECO:0007005"/>
    <property type="project" value="UniProtKB"/>
</dbReference>
<dbReference type="GO" id="GO:0003729">
    <property type="term" value="F:mRNA binding"/>
    <property type="evidence" value="ECO:0000314"/>
    <property type="project" value="EcoCyc"/>
</dbReference>
<dbReference type="GO" id="GO:0003723">
    <property type="term" value="F:RNA binding"/>
    <property type="evidence" value="ECO:0000314"/>
    <property type="project" value="EcoCyc"/>
</dbReference>
<dbReference type="GO" id="GO:0003727">
    <property type="term" value="F:single-stranded RNA binding"/>
    <property type="evidence" value="ECO:0000314"/>
    <property type="project" value="EcoCyc"/>
</dbReference>
<dbReference type="GO" id="GO:0003735">
    <property type="term" value="F:structural constituent of ribosome"/>
    <property type="evidence" value="ECO:0000314"/>
    <property type="project" value="CAFA"/>
</dbReference>
<dbReference type="GO" id="GO:0002181">
    <property type="term" value="P:cytoplasmic translation"/>
    <property type="evidence" value="ECO:0000303"/>
    <property type="project" value="ComplexPortal"/>
</dbReference>
<dbReference type="GO" id="GO:2000766">
    <property type="term" value="P:negative regulation of cytoplasmic translation"/>
    <property type="evidence" value="ECO:0000314"/>
    <property type="project" value="EcoCyc"/>
</dbReference>
<dbReference type="GO" id="GO:2000767">
    <property type="term" value="P:positive regulation of cytoplasmic translation"/>
    <property type="evidence" value="ECO:0000270"/>
    <property type="project" value="EcoCyc"/>
</dbReference>
<dbReference type="GO" id="GO:0000028">
    <property type="term" value="P:ribosomal small subunit assembly"/>
    <property type="evidence" value="ECO:0000314"/>
    <property type="project" value="CAFA"/>
</dbReference>
<dbReference type="GO" id="GO:0006412">
    <property type="term" value="P:translation"/>
    <property type="evidence" value="ECO:0000315"/>
    <property type="project" value="EcoCyc"/>
</dbReference>
<dbReference type="CDD" id="cd05687">
    <property type="entry name" value="S1_RPS1_repeat_ec1_hs1"/>
    <property type="match status" value="1"/>
</dbReference>
<dbReference type="CDD" id="cd04465">
    <property type="entry name" value="S1_RPS1_repeat_ec2_hs2"/>
    <property type="match status" value="1"/>
</dbReference>
<dbReference type="CDD" id="cd05688">
    <property type="entry name" value="S1_RPS1_repeat_ec3"/>
    <property type="match status" value="1"/>
</dbReference>
<dbReference type="CDD" id="cd05689">
    <property type="entry name" value="S1_RPS1_repeat_ec4"/>
    <property type="match status" value="1"/>
</dbReference>
<dbReference type="CDD" id="cd05690">
    <property type="entry name" value="S1_RPS1_repeat_ec5"/>
    <property type="match status" value="1"/>
</dbReference>
<dbReference type="CDD" id="cd05691">
    <property type="entry name" value="S1_RPS1_repeat_ec6"/>
    <property type="match status" value="1"/>
</dbReference>
<dbReference type="FunFam" id="2.40.50.140:FF:000011">
    <property type="entry name" value="30S ribosomal protein S1"/>
    <property type="match status" value="1"/>
</dbReference>
<dbReference type="FunFam" id="2.40.50.140:FF:000016">
    <property type="entry name" value="30S ribosomal protein S1"/>
    <property type="match status" value="1"/>
</dbReference>
<dbReference type="FunFam" id="2.40.50.140:FF:000017">
    <property type="entry name" value="30S ribosomal protein S1"/>
    <property type="match status" value="1"/>
</dbReference>
<dbReference type="FunFam" id="2.40.50.140:FF:000018">
    <property type="entry name" value="30S ribosomal protein S1"/>
    <property type="match status" value="1"/>
</dbReference>
<dbReference type="FunFam" id="2.40.50.140:FF:000021">
    <property type="entry name" value="30S ribosomal protein S1"/>
    <property type="match status" value="1"/>
</dbReference>
<dbReference type="FunFam" id="2.40.50.140:FF:000036">
    <property type="entry name" value="30S ribosomal protein S1"/>
    <property type="match status" value="1"/>
</dbReference>
<dbReference type="Gene3D" id="2.40.50.140">
    <property type="entry name" value="Nucleic acid-binding proteins"/>
    <property type="match status" value="6"/>
</dbReference>
<dbReference type="InterPro" id="IPR012340">
    <property type="entry name" value="NA-bd_OB-fold"/>
</dbReference>
<dbReference type="InterPro" id="IPR050437">
    <property type="entry name" value="Ribos_protein_bS1-like"/>
</dbReference>
<dbReference type="InterPro" id="IPR000110">
    <property type="entry name" value="Ribosomal_bS1"/>
</dbReference>
<dbReference type="InterPro" id="IPR035104">
    <property type="entry name" value="Ribosomal_protein_S1-like"/>
</dbReference>
<dbReference type="InterPro" id="IPR003029">
    <property type="entry name" value="S1_domain"/>
</dbReference>
<dbReference type="NCBIfam" id="NF004951">
    <property type="entry name" value="PRK06299.1-1"/>
    <property type="match status" value="1"/>
</dbReference>
<dbReference type="NCBIfam" id="NF004952">
    <property type="entry name" value="PRK06299.1-2"/>
    <property type="match status" value="1"/>
</dbReference>
<dbReference type="NCBIfam" id="NF004954">
    <property type="entry name" value="PRK06299.1-4"/>
    <property type="match status" value="1"/>
</dbReference>
<dbReference type="NCBIfam" id="TIGR00717">
    <property type="entry name" value="rpsA"/>
    <property type="match status" value="1"/>
</dbReference>
<dbReference type="PANTHER" id="PTHR10724">
    <property type="entry name" value="30S RIBOSOMAL PROTEIN S1"/>
    <property type="match status" value="1"/>
</dbReference>
<dbReference type="PANTHER" id="PTHR10724:SF7">
    <property type="entry name" value="SMALL RIBOSOMAL SUBUNIT PROTEIN BS1C"/>
    <property type="match status" value="1"/>
</dbReference>
<dbReference type="Pfam" id="PF00575">
    <property type="entry name" value="S1"/>
    <property type="match status" value="6"/>
</dbReference>
<dbReference type="PIRSF" id="PIRSF002111">
    <property type="entry name" value="RpsA"/>
    <property type="match status" value="1"/>
</dbReference>
<dbReference type="PRINTS" id="PR00681">
    <property type="entry name" value="RIBOSOMALS1"/>
</dbReference>
<dbReference type="SMART" id="SM00316">
    <property type="entry name" value="S1"/>
    <property type="match status" value="6"/>
</dbReference>
<dbReference type="SUPFAM" id="SSF50249">
    <property type="entry name" value="Nucleic acid-binding proteins"/>
    <property type="match status" value="6"/>
</dbReference>
<dbReference type="PROSITE" id="PS50126">
    <property type="entry name" value="S1"/>
    <property type="match status" value="6"/>
</dbReference>
<comment type="function">
    <text evidence="4 5 6 8 11 12 14 20 23 25">Required for translation of most natural mRNAs except for leaderless mRNA (PubMed:12068815, PubMed:17376482, PubMed:24339747, PubMed:7003157, PubMed:9677288). Binds mRNA upstream of the Shine-Dalgarno (SD) sequence and helps it bind to the 30S ribosomal subunit; acts as an RNA chaperone to unfold structured mRNA on the ribosome but is not essential for mRNAs with strong SDs and little 5'-UTR structure, thus it may help fine-tune which mRNAs that are translated (PubMed:24339747). Unwinds dsRNA by binding to transiently formed ssRNA regions; binds about 10 nucleotides (PubMed:22908248). Has a preference for polypyrimidine tracts (PubMed:778845). Negatively autoregulates its own translation (PubMed:2120211).</text>
</comment>
<comment type="function">
    <text evidence="2 5 8 9">It is not clear if it plays a role in trans-translation (a process which rescues stalled ribosomes). Evidence for its role; binds to tmRNA with very high affinity, is required for binding of tmRNA to 30S subunit (PubMed:11101533, PubMed:15340139). Thought to play a role only in translation of the tmRNA in vitro (PubMed:17392345). Evidence against its role; overexpression of whole protein or various S1 fragments inhibits translation, they have no effect on trans-translation, and an in vitro system with S1-less ribosomes performs trans-translation (PubMed:15340139, PubMed:17376482). In trans-translation Ala-aminoacylated transfer-messenger RNA (tmRNA, product of the ssrA gene; the 2 termini fold to resemble tRNA(Ala) while it encodes a short internal open reading frame (the tag peptide)) acts like a tRNA, entering the A-site of the ribosome and displacing the stalled mRNA (which is subsequently degraded). The ribosome then switches to translate the ORF on the tmRNA, the nascent peptide is terminated with the 'tag peptide' encoded by the tmRNA and thus targeted for degradation.</text>
</comment>
<comment type="function">
    <text evidence="13 15 19 24">(Microbial infection) During infection by bacteriophage Qbeta, part of the viral RNA-dependent RNA polymerase complex; this subunit is required for RNA replication initiation activity during synthesis of (-) strand RNA from the (+) strand genomic RNA but not for (+) strand synthesis from the (-) strand (PubMed:25122749, PubMed:6358207). Binds an approximately 70 nucleotide RNA internal to the viral replicase gene (the M-site) (PubMed:25122749). Others have reported it is not involved in RNA replication initiation but rather in termination of RNA synthesis and is required for termination whether it is the (+) or (-) strand that is being synthesized (PubMed:23653193).</text>
</comment>
<comment type="function">
    <text evidence="7">(Microbial infection) During infection by bacteriophage T4, plays a significant role in substrate choice by viral endoribonuclease RegB.</text>
</comment>
<comment type="subunit">
    <text evidence="3 4 6 16 17 20 21 23 26">Part of the 30S ribosomal subunit; the largest protein subunit, it is loosely associated and not always found in ribosomal crystal structures (PubMed:342903, PubMed:7003157, PubMed:7041110, PubMed:778845, PubMed:35264790). Does not bind rRNA. Probably requires ribosomal protein uS2 to associate with the 30S subunit (PubMed:12068815). Binds in the junction of the head, platform and main body of the 30S subunit; the N-terminus penetrates the 30S subunit while the C-terminus faces ribosomal protein uS2 (PubMed:11593008). Nascent polypeptide chains cross-link this protein in situ (PubMed:9716382). Can be cross-linked to mRNA in the ribosome (PubMed:1712292). In stalled/collided disomes (pairs of ribosomes where the leading ribosome is stalled and a second ribosome has collided with it) is only found in the collided ribosome, it has been ejected from the leading stalled ribosome (PubMed:35264790).</text>
</comment>
<comment type="subunit">
    <text evidence="15 19 24">(Microbial infection) During infection by bacteriophage Qbeta, part of the viral RNA-dependent RNA polymerase complex, the other subunits are the viral replicase catalytic subunit (AC P14647), host EF-Tu and EF-Ts (PubMed:25122749, PubMed:6358207, PubMed:816798).</text>
</comment>
<comment type="interaction">
    <interactant intactId="EBI-546520">
        <id>P0AG67</id>
    </interactant>
    <interactant intactId="EBI-546520">
        <id>P0AG67</id>
        <label>rpsA</label>
    </interactant>
    <organismsDiffer>false</organismsDiffer>
    <experiments>2</experiments>
</comment>
<comment type="subcellular location">
    <subcellularLocation>
        <location evidence="16">Cytoplasm</location>
    </subcellularLocation>
</comment>
<comment type="induction">
    <text evidence="11">Represses its own translation via the N-terminus (at protein level).</text>
</comment>
<comment type="domain">
    <text evidence="5 11 14 15 19 20">The 6 S1 motif domains are not equivalent; the first 2 no longer bind rRNA but instead are involved in protein-ribosome and protein-protein interactions. Binds to the 30S ribosomal subunit via its N-terminal fragment (190 residues, the first 2 S1 motifs) and allows translation by S1-free ribosomes (PubMed:15340139, PubMed:7003157). The same fragment represses its own translation (PubMed:2120211). The first 3 S1 motifs do however bind to mRNA pseudoknots in the 5'-UTR of at least 1 mRNA (rpsO); deletion of S1 motifs 1-3 but not motifs 4-6 is not viable, although a deletion of motifs 4-6 grows slowly and is cold-sensitive (PubMed:24339747). In case of infection by bacteriophage Qbeta the same N-terminal fragment is necessary and sufficient to form the Qbeta virus RNA-dependent RNA polymerase, although in vitro (-) strand RNA synthesis from the (+) strand genomic RNA also requires the third S1 motif (residues 1-273) (PubMed:25122749, PubMed:6358207). The third S1 motif is required to bind mRNA, tmRNA and viral M-site RNA but requires cooperation with other S1 motifs (PubMed:15340139, PubMed:25122749).</text>
</comment>
<comment type="PTM">
    <text evidence="22">Phosphorylated; probably on a serine.</text>
</comment>
<comment type="PTM">
    <text evidence="18">(Microbial infection) ADP-ribosylated and RNAylated (about 30% of the modifications) by phage T4 ADP-ribosyltransferase ModB (PubMed:37587340). This results in covalent RNA-S1 conjugates and allows the phage to reprogram the host's gene-expression system (PubMed:37587340).</text>
</comment>
<comment type="disruption phenotype">
    <text evidence="25">Essential, it cannot be deleted. Upon depletion cell growth and total protein synthesis become linear.</text>
</comment>
<comment type="similarity">
    <text evidence="29">Belongs to the bacterial ribosomal protein bS1 family.</text>
</comment>
<reference key="1">
    <citation type="journal article" date="1982" name="Proc. Natl. Acad. Sci. U.S.A.">
        <title>Primary structure of Escherichia coli ribosomal protein S1 and of its gene rpsA.</title>
        <authorList>
            <person name="Schnier J."/>
            <person name="Kimura M."/>
            <person name="Foulaki K."/>
            <person name="Subramanian A.R."/>
            <person name="Isono K."/>
            <person name="Wittmann-Liebold B."/>
        </authorList>
    </citation>
    <scope>NUCLEOTIDE SEQUENCE [GENOMIC DNA]</scope>
    <scope>PROTEIN SEQUENCE</scope>
    <scope>SUBUNIT</scope>
    <source>
        <strain>K12 / JS6.5</strain>
        <strain>MRE-600</strain>
    </source>
</reference>
<reference key="2">
    <citation type="journal article" date="1982" name="Nucleic Acids Res.">
        <title>The DNA sequence of the gene rpsA of Escherichia coli coding for ribosomal protein S1.</title>
        <authorList>
            <person name="Schnier J."/>
            <person name="Isono K."/>
        </authorList>
    </citation>
    <scope>NUCLEOTIDE SEQUENCE [GENOMIC DNA]</scope>
    <source>
        <strain>K12 / JS6.5</strain>
    </source>
</reference>
<reference key="3">
    <citation type="journal article" date="1996" name="DNA Res.">
        <title>A 718-kb DNA sequence of the Escherichia coli K-12 genome corresponding to the 12.7-28.0 min region on the linkage map.</title>
        <authorList>
            <person name="Oshima T."/>
            <person name="Aiba H."/>
            <person name="Baba T."/>
            <person name="Fujita K."/>
            <person name="Hayashi K."/>
            <person name="Honjo A."/>
            <person name="Ikemoto K."/>
            <person name="Inada T."/>
            <person name="Itoh T."/>
            <person name="Kajihara M."/>
            <person name="Kanai K."/>
            <person name="Kashimoto K."/>
            <person name="Kimura S."/>
            <person name="Kitagawa M."/>
            <person name="Makino K."/>
            <person name="Masuda S."/>
            <person name="Miki T."/>
            <person name="Mizobuchi K."/>
            <person name="Mori H."/>
            <person name="Motomura K."/>
            <person name="Nakamura Y."/>
            <person name="Nashimoto H."/>
            <person name="Nishio Y."/>
            <person name="Saito N."/>
            <person name="Sampei G."/>
            <person name="Seki Y."/>
            <person name="Tagami H."/>
            <person name="Takemoto K."/>
            <person name="Wada C."/>
            <person name="Yamamoto Y."/>
            <person name="Yano M."/>
            <person name="Horiuchi T."/>
        </authorList>
    </citation>
    <scope>NUCLEOTIDE SEQUENCE [LARGE SCALE GENOMIC DNA]</scope>
    <source>
        <strain>K12 / W3110 / ATCC 27325 / DSM 5911</strain>
    </source>
</reference>
<reference key="4">
    <citation type="journal article" date="1997" name="Science">
        <title>The complete genome sequence of Escherichia coli K-12.</title>
        <authorList>
            <person name="Blattner F.R."/>
            <person name="Plunkett G. III"/>
            <person name="Bloch C.A."/>
            <person name="Perna N.T."/>
            <person name="Burland V."/>
            <person name="Riley M."/>
            <person name="Collado-Vides J."/>
            <person name="Glasner J.D."/>
            <person name="Rode C.K."/>
            <person name="Mayhew G.F."/>
            <person name="Gregor J."/>
            <person name="Davis N.W."/>
            <person name="Kirkpatrick H.A."/>
            <person name="Goeden M.A."/>
            <person name="Rose D.J."/>
            <person name="Mau B."/>
            <person name="Shao Y."/>
        </authorList>
    </citation>
    <scope>NUCLEOTIDE SEQUENCE [LARGE SCALE GENOMIC DNA]</scope>
    <source>
        <strain>K12 / MG1655 / ATCC 47076</strain>
    </source>
</reference>
<reference key="5">
    <citation type="journal article" date="2006" name="Mol. Syst. Biol.">
        <title>Highly accurate genome sequences of Escherichia coli K-12 strains MG1655 and W3110.</title>
        <authorList>
            <person name="Hayashi K."/>
            <person name="Morooka N."/>
            <person name="Yamamoto Y."/>
            <person name="Fujita K."/>
            <person name="Isono K."/>
            <person name="Choi S."/>
            <person name="Ohtsubo E."/>
            <person name="Baba T."/>
            <person name="Wanner B.L."/>
            <person name="Mori H."/>
            <person name="Horiuchi T."/>
        </authorList>
    </citation>
    <scope>NUCLEOTIDE SEQUENCE [LARGE SCALE GENOMIC DNA]</scope>
    <source>
        <strain>K12 / W3110 / ATCC 27325 / DSM 5911</strain>
    </source>
</reference>
<reference key="6">
    <citation type="journal article" date="1984" name="Mol. Gen. Genet.">
        <title>Transcriptional organization of the rpsA operon of Escherichia coli.</title>
        <authorList>
            <person name="Pedersen S."/>
            <person name="Skouv J."/>
            <person name="Kajitani M."/>
            <person name="Ishihama A."/>
        </authorList>
    </citation>
    <scope>NUCLEOTIDE SEQUENCE [GENOMIC DNA] OF 1-20</scope>
</reference>
<reference key="7">
    <citation type="journal article" date="1980" name="J. Mol. Biol.">
        <title>The major ribosome binding site of Escherichia coli ribosomal protein S1 is located in its N-terminal segment.</title>
        <authorList>
            <person name="Giorginis S."/>
            <person name="Subramanian A.R."/>
        </authorList>
    </citation>
    <scope>PROTEIN SEQUENCE OF 1-6 AND 332-334</scope>
    <scope>FUNCTION</scope>
    <scope>SUBUNIT</scope>
    <scope>DOMAIN</scope>
    <source>
        <strain>MRE600</strain>
    </source>
</reference>
<reference key="8">
    <citation type="submission" date="2004-01" db="UniProtKB">
        <authorList>
            <person name="Bienvenut W.V."/>
            <person name="Barblan J."/>
            <person name="Quadroni M."/>
        </authorList>
    </citation>
    <scope>PROTEIN SEQUENCE OF 118-128</scope>
    <scope>IDENTIFICATION BY MASS SPECTROMETRY</scope>
</reference>
<reference key="9">
    <citation type="journal article" date="1985" name="J. Mol. Biol.">
        <title>Primary structure of the hip gene of Escherichia coli and of its product, the beta subunit of integration host factor.</title>
        <authorList>
            <person name="Flamm E."/>
            <person name="Weisberg R.A."/>
        </authorList>
    </citation>
    <scope>NUCLEOTIDE SEQUENCE [GENOMIC DNA] OF 550-557</scope>
    <source>
        <strain>K12</strain>
    </source>
</reference>
<reference key="10">
    <citation type="journal article" date="1997" name="Electrophoresis">
        <title>Comparing the predicted and observed properties of proteins encoded in the genome of Escherichia coli K-12.</title>
        <authorList>
            <person name="Link A.J."/>
            <person name="Robison K."/>
            <person name="Church G.M."/>
        </authorList>
    </citation>
    <scope>PROTEIN SEQUENCE OF 1-11</scope>
    <source>
        <strain>K12 / EMG2</strain>
    </source>
</reference>
<reference key="11">
    <citation type="submission" date="1996-02" db="UniProtKB">
        <authorList>
            <person name="Frutiger S."/>
            <person name="Hughes G.J."/>
            <person name="Pasquali C."/>
            <person name="Hochstrasser D.F."/>
        </authorList>
    </citation>
    <scope>PROTEIN SEQUENCE OF 1-11</scope>
    <source>
        <strain>K12 / W3110 / ATCC 27325 / DSM 5911</strain>
    </source>
</reference>
<reference key="12">
    <citation type="journal article" date="1976" name="Proc. Natl. Acad. Sci. U.S.A.">
        <title>Alteration of polynucleotide secondary structure by ribosomal protein S1.</title>
        <authorList>
            <person name="Bear D.G."/>
            <person name="Ng R."/>
            <person name="Van Derveer D."/>
            <person name="Johnson N.P."/>
            <person name="Thomas G."/>
            <person name="Schleich T."/>
            <person name="Noller H.F."/>
        </authorList>
    </citation>
    <scope>FUNCTION</scope>
    <scope>SUBUNIT</scope>
    <scope>RNA-BINDING</scope>
    <source>
        <strain>Q13</strain>
    </source>
</reference>
<reference key="13">
    <citation type="journal article" date="1976" name="J. Biol. Chem.">
        <title>Immunochemical analysis of the functions of the subunits of phage Qbeta ribonucleic acid replicase.</title>
        <authorList>
            <person name="Carmichael G.G."/>
            <person name="Landers T.A."/>
            <person name="Weber K."/>
        </authorList>
    </citation>
    <scope>FUNCTION IN QBETA VIRAL RNA REPLICATION (MICROBIAL INFECTION)</scope>
    <scope>SUBUNIT</scope>
</reference>
<reference key="14">
    <citation type="journal article" date="1977" name="Mol. Gen. Genet.">
        <title>Exchange of individual ribosomal proteins between ribosomes as studied by heavy isotope-transfer experiments.</title>
        <authorList>
            <person name="Subramanian A.R."/>
            <person name="van Duin J."/>
        </authorList>
    </citation>
    <scope>SUBUNIT</scope>
    <scope>SUBCELLULAR LOCATION</scope>
    <source>
        <strain>MRE600</strain>
    </source>
</reference>
<reference key="15">
    <citation type="journal article" date="1983" name="J. Biol. Chem.">
        <title>The activity of discrete fragments of ribosomal protein S1 in Q beta replicase function.</title>
        <authorList>
            <person name="Guerrier-Takada C."/>
            <person name="Subramanian A.R."/>
            <person name="Cole P.E."/>
        </authorList>
    </citation>
    <scope>FUNCTION IN QBETA VIRAL RNA REPLICATION (MICROBIAL INFECTION)</scope>
    <scope>SUBUNIT</scope>
    <scope>DOMAIN</scope>
</reference>
<reference key="16">
    <citation type="journal article" date="1990" name="J. Biol. Chem.">
        <title>Ribosomal protein S1 of Escherichia coli is the effector for the regulation of its own synthesis.</title>
        <authorList>
            <person name="Skouv J."/>
            <person name="Schnier J."/>
            <person name="Rasmussen M.D."/>
            <person name="Subramanian A.R."/>
            <person name="Pedersen S."/>
        </authorList>
    </citation>
    <scope>FUNCTION</scope>
    <scope>INDUCTION</scope>
    <scope>DOMAIN</scope>
</reference>
<reference key="17">
    <citation type="journal article" date="1991" name="EMBO J.">
        <title>The path of mRNA through the Escherichia coli ribosome; site-directed cross-linking of mRNA analogues carrying a photo-reactive label at various points 3' to the decoding site.</title>
        <authorList>
            <person name="Rinke-Appel J."/>
            <person name="Juenke N."/>
            <person name="Stade K."/>
            <person name="Brimacombe R."/>
        </authorList>
    </citation>
    <scope>FUNCTION</scope>
    <scope>SUBUNIT</scope>
    <scope>CROSS-LINKING TO MRNA</scope>
</reference>
<reference key="18">
    <citation type="journal article" date="1997" name="Electrophoresis">
        <title>Escherichia coli proteome analysis using the gene-protein database.</title>
        <authorList>
            <person name="VanBogelen R.A."/>
            <person name="Abshire K.Z."/>
            <person name="Moldover B."/>
            <person name="Olson E.R."/>
            <person name="Neidhardt F.C."/>
        </authorList>
    </citation>
    <scope>IDENTIFICATION BY 2D-GEL</scope>
</reference>
<reference key="19">
    <citation type="journal article" date="1998" name="Eur. J. Biochem.">
        <title>Flexibility of the nascent polypeptide chain within the ribosome -- contacts from the peptide N-terminus to a specific region of the 30S subunit.</title>
        <authorList>
            <person name="Choi K.M."/>
            <person name="Atkins J.F."/>
            <person name="Gesteland R.F."/>
            <person name="Brimacombe R."/>
        </authorList>
    </citation>
    <scope>SUBUNIT</scope>
    <scope>CROSS-LINKING TO NASCENT POLYPEPTIDE CHAINS</scope>
</reference>
<reference key="20">
    <citation type="journal article" date="1995" name="Mol. Microbiol.">
        <title>Identification of phosphoproteins in Escherichia coli.</title>
        <authorList>
            <person name="Freestone P."/>
            <person name="Grant S."/>
            <person name="Toth I."/>
            <person name="Norris V."/>
        </authorList>
    </citation>
    <scope>PHOSPHORYLATION</scope>
    <scope>PROTEIN SEQUENCE OF 1-13</scope>
    <source>
        <strain>E2348/69 / EPEC / MAR001</strain>
    </source>
</reference>
<reference key="21">
    <citation type="journal article" date="1998" name="J. Mol. Biol.">
        <title>Ribosomal protein S1 is required for translation of most, if not all, natural mRNAs in Escherichia coli in vivo.</title>
        <authorList>
            <person name="Sorensen M.A."/>
            <person name="Fricke J."/>
            <person name="Pedersen S."/>
        </authorList>
    </citation>
    <scope>FUNCTION</scope>
    <scope>DISRUPTION PHENOTYPE</scope>
</reference>
<reference key="22">
    <citation type="journal article" date="2000" name="EMBO J.">
        <title>Binding and cross-linking of tmRNA to ribosomal protein S1, on and off the Escherichia coli ribosome.</title>
        <authorList>
            <person name="Wower I.K."/>
            <person name="Zwieb C.W."/>
            <person name="Guven S.A."/>
            <person name="Wower J."/>
        </authorList>
    </citation>
    <scope>FUNCTION</scope>
    <scope>TMRNA BINDING</scope>
    <source>
        <strain>MRE600</strain>
    </source>
</reference>
<reference key="23">
    <citation type="journal article" date="2002" name="Mol. Microbiol.">
        <title>Effects of ribosomal proteins S1, S2 and the DeaD/CsdA DEAD-box helicase on translation of leaderless and canonical mRNAs in Escherichia coli.</title>
        <authorList>
            <person name="Moll I."/>
            <person name="Grill S."/>
            <person name="Gruendling A."/>
            <person name="Blaesi U."/>
        </authorList>
    </citation>
    <scope>FUNCTION</scope>
    <scope>SUBUNIT</scope>
</reference>
<reference key="24">
    <citation type="journal article" date="2004" name="Proc. Natl. Acad. Sci. U.S.A.">
        <title>Ribosomal protein S1 binds mRNA and tmRNA similarly but plays distinct roles in translation of these molecules.</title>
        <authorList>
            <person name="McGinness K.E."/>
            <person name="Sauer R.T."/>
        </authorList>
    </citation>
    <scope>FUNCTION</scope>
    <scope>DOMAIN</scope>
    <scope>TMRNA BINDING</scope>
    <scope>MRNA BINDING</scope>
    <source>
        <strain>X90</strain>
    </source>
</reference>
<reference key="25">
    <citation type="journal article" date="2006" name="Nucleic Acids Res.">
        <title>Activation of RegB endoribonuclease by S1 ribosomal protein requires an 11 nt conserved sequence.</title>
        <authorList>
            <person name="Durand S."/>
            <person name="Richard G."/>
            <person name="Bisaglia M."/>
            <person name="Laalami S."/>
            <person name="Bontems F."/>
            <person name="Uzan M."/>
        </authorList>
    </citation>
    <scope>FUNCTION IN T4 VIRUS REGB ACTIVATION (MICROBIAL INFECTION)</scope>
</reference>
<reference key="26">
    <citation type="journal article" date="2007" name="J. Mol. Biol.">
        <title>Ribosomal protein S1 is not essential for the trans-translation machinery.</title>
        <authorList>
            <person name="Qi H."/>
            <person name="Shimizu Y."/>
            <person name="Ueda T."/>
        </authorList>
    </citation>
    <scope>LACK OF FUNCTION IN TRANS-TRANSLATION</scope>
</reference>
<reference key="27">
    <citation type="journal article" date="2007" name="Nucleic Acids Res.">
        <title>Ribosomal protein S1 influences trans-translation in vitro and in vivo.</title>
        <authorList>
            <person name="Saguy M."/>
            <person name="Gillet R."/>
            <person name="Skorski P."/>
            <person name="Hermann-Le Denmat S."/>
            <person name="Felden B."/>
        </authorList>
    </citation>
    <scope>FUNCTION IN TRANS-TRANSLATION</scope>
</reference>
<reference key="28">
    <citation type="journal article" date="2009" name="Mol. Cell. Proteomics">
        <title>Lysine acetylation is a highly abundant and evolutionarily conserved modification in Escherichia coli.</title>
        <authorList>
            <person name="Zhang J."/>
            <person name="Sprung R."/>
            <person name="Pei J."/>
            <person name="Tan X."/>
            <person name="Kim S."/>
            <person name="Zhu H."/>
            <person name="Liu C.F."/>
            <person name="Grishin N.V."/>
            <person name="Zhao Y."/>
        </authorList>
    </citation>
    <scope>ACETYLATION [LARGE SCALE ANALYSIS] AT LYS-229; LYS-279 AND LYS-363</scope>
    <scope>IDENTIFICATION BY MASS SPECTROMETRY</scope>
    <source>
        <strain>K12 / JW1106</strain>
        <strain>K12 / MG1655 / ATCC 47076</strain>
    </source>
</reference>
<reference key="29">
    <citation type="journal article" date="2012" name="Proc. Natl. Acad. Sci. U.S.A.">
        <title>Ribosomal protein S1 unwinds double-stranded RNA in multiple steps.</title>
        <authorList>
            <person name="Qu X."/>
            <person name="Lancaster L."/>
            <person name="Noller H.F."/>
            <person name="Bustamante C."/>
            <person name="Tinoco I. Jr."/>
        </authorList>
    </citation>
    <scope>FUNCTION IN UNWINDING DSRNA</scope>
    <scope>RNA-BINDING</scope>
</reference>
<reference key="30">
    <citation type="journal article" date="2013" name="Nat. Commun.">
        <title>Ribosomal protein S1 functions as a termination factor in RNA synthesis by Qbeta phage replicase.</title>
        <authorList>
            <person name="Vasilyev N.N."/>
            <person name="Kutlubaeva Z.S."/>
            <person name="Ugarov V.I."/>
            <person name="Chetverina H.V."/>
            <person name="Chetverin A.B."/>
        </authorList>
    </citation>
    <scope>FUNCTION IN QBETA VIRAL RNA REPLICATION</scope>
    <scope>RNA-BINDING</scope>
</reference>
<reference key="31">
    <citation type="journal article" date="2013" name="PLoS Biol.">
        <title>Escherichia coli ribosomal protein S1 unfolds structured mRNAs onto the ribosome for active translation initiation.</title>
        <authorList>
            <person name="Duval M."/>
            <person name="Korepanov A."/>
            <person name="Fuchsbauer O."/>
            <person name="Fechter P."/>
            <person name="Haller A."/>
            <person name="Fabbretti A."/>
            <person name="Choulier L."/>
            <person name="Micura R."/>
            <person name="Klaholz B.P."/>
            <person name="Romby P."/>
            <person name="Springer M."/>
            <person name="Marzi S."/>
        </authorList>
    </citation>
    <scope>FUNCTION AS A RIBOSOME CHAPERONE</scope>
    <scope>DOMAIN</scope>
    <scope>MRNA-BINDING</scope>
</reference>
<reference key="32">
    <citation type="journal article" date="2012" name="Biochimie">
        <title>Multiple activities of RNA-binding proteins S1 and Hfq.</title>
        <authorList>
            <person name="Hajnsdorf E."/>
            <person name="Boni I.V."/>
        </authorList>
    </citation>
    <scope>REVIEW</scope>
</reference>
<reference key="33">
    <citation type="journal article" date="2014" name="Curr. Opin. Struct. Biol.">
        <title>A new system for naming ribosomal proteins.</title>
        <authorList>
            <person name="Ban N."/>
            <person name="Beckmann R."/>
            <person name="Cate J.H.D."/>
            <person name="Dinman J.D."/>
            <person name="Dragon F."/>
            <person name="Ellis S.R."/>
            <person name="Lafontaine D.L.J."/>
            <person name="Lindahl L."/>
            <person name="Liljas A."/>
            <person name="Lipton J.M."/>
            <person name="McAlear M.A."/>
            <person name="Moore P.B."/>
            <person name="Noller H.F."/>
            <person name="Ortega J."/>
            <person name="Panse V.G."/>
            <person name="Ramakrishnan V."/>
            <person name="Spahn C.M.T."/>
            <person name="Steitz T.A."/>
            <person name="Tchorzewski M."/>
            <person name="Tollervey D."/>
            <person name="Warren A.J."/>
            <person name="Williamson J.R."/>
            <person name="Wilson D."/>
            <person name="Yonath A."/>
            <person name="Yusupov M."/>
        </authorList>
    </citation>
    <scope>NOMENCLATURE</scope>
</reference>
<reference key="34">
    <citation type="journal article" date="2023" name="Nature">
        <title>A viral ADP-ribosyltransferase attaches RNA chains to host proteins.</title>
        <authorList>
            <person name="Wolfram-Schauerte M."/>
            <person name="Pozhydaieva N."/>
            <person name="Grawenhoff J."/>
            <person name="Welp L.M."/>
            <person name="Silbern I."/>
            <person name="Wulf A."/>
            <person name="Billau F.A."/>
            <person name="Glatter T."/>
            <person name="Urlaub H."/>
            <person name="Jaeschke A."/>
            <person name="Hoefer K."/>
        </authorList>
    </citation>
    <scope>RNAYLATION AT ARG-139 (MICROBIAL INFECTION)</scope>
    <scope>MUTAGENESIS OF ARG-139</scope>
</reference>
<reference key="35">
    <citation type="journal article" date="2001" name="Proc. Natl. Acad. Sci. U.S.A.">
        <title>Visualization of protein S1 within the 30S ribosomal subunit and its interaction with messenger RNA.</title>
        <authorList>
            <person name="Sengupta J."/>
            <person name="Agrawal R.K."/>
            <person name="Frank J."/>
        </authorList>
    </citation>
    <scope>POSITION BY CRYO-ELECTRON MICROSCOPY</scope>
    <scope>SUBUNIT</scope>
</reference>
<reference key="36">
    <citation type="journal article" date="2009" name="Nucleic Acids Res.">
        <title>Probing the relationship between Gram-negative and Gram-positive S1 proteins by sequence analysis.</title>
        <authorList>
            <person name="Salah P."/>
            <person name="Bisaglia M."/>
            <person name="Aliprandi P."/>
            <person name="Uzan M."/>
            <person name="Sizun C."/>
            <person name="Bontems F."/>
        </authorList>
    </citation>
    <scope>STRUCTURE BY NMR OF 267-361 AND OF 441-528</scope>
    <scope>RNA-BINDING</scope>
</reference>
<reference key="37">
    <citation type="journal article" date="2014" name="Nucleic Acids Res.">
        <title>Molecular insights into replication initiation by Qbeta replicase using ribosomal protein S1.</title>
        <authorList>
            <person name="Takeshita D."/>
            <person name="Yamashita S."/>
            <person name="Tomita K."/>
        </authorList>
    </citation>
    <scope>X-RAY CRYSTALLOGRAPHY (2.90 ANGSTROMS) OF 1-273 IN QBETA VIRUS RNA POLYMERASE (MICROBIAL INFECTION)</scope>
    <scope>FUNCTION IN VIRAL RNA REPLICATION (MICROBIAL INFECTION)</scope>
    <scope>SUBUNIT (MICROBIAL INFECTION)</scope>
    <scope>DOMAIN</scope>
    <scope>RNA-BINDING</scope>
    <scope>MUTAGENESIS OF TYR-205; PHE-208; HIS-219 AND ARG-254</scope>
    <source>
        <strain>K12 / W3110 / ATCC 27325 / DSM 5911</strain>
    </source>
</reference>
<reference evidence="30" key="38">
    <citation type="journal article" date="2022" name="Nature">
        <title>Ribosome collisions induce mRNA cleavage and ribosome rescue in bacteria.</title>
        <authorList>
            <person name="Saito K."/>
            <person name="Kratzat H."/>
            <person name="Campbell A."/>
            <person name="Buschauer R."/>
            <person name="Burroughs A.M."/>
            <person name="Berninghausen O."/>
            <person name="Aravind L."/>
            <person name="Green R."/>
            <person name="Beckmann R."/>
            <person name="Buskirk A.R."/>
        </authorList>
    </citation>
    <scope>STRUCTURE BY ELECTRON MICROSCOPY (4.48 ANGSTROMS)</scope>
    <scope>SUBUNIT</scope>
    <source>
        <strain>K12 / MG1655 / ATCC 47076</strain>
    </source>
</reference>
<protein>
    <recommendedName>
        <fullName evidence="27">Small ribosomal subunit protein bS1</fullName>
    </recommendedName>
    <alternativeName>
        <fullName>30S ribosomal protein S1</fullName>
    </alternativeName>
    <alternativeName>
        <fullName evidence="28">Bacteriophage Q beta RNA-directed RNA polymerase subunit I</fullName>
    </alternativeName>
</protein>
<name>RS1_ECOLI</name>
<proteinExistence type="evidence at protein level"/>
<feature type="chain" id="PRO_0000196033" description="Small ribosomal subunit protein bS1">
    <location>
        <begin position="1"/>
        <end position="557"/>
    </location>
</feature>
<feature type="domain" description="S1 motif 1" evidence="1">
    <location>
        <begin position="21"/>
        <end position="87"/>
    </location>
</feature>
<feature type="domain" description="S1 motif 2" evidence="1">
    <location>
        <begin position="105"/>
        <end position="171"/>
    </location>
</feature>
<feature type="domain" description="S1 motif 3" evidence="1">
    <location>
        <begin position="192"/>
        <end position="260"/>
    </location>
</feature>
<feature type="domain" description="S1 motif 4" evidence="1">
    <location>
        <begin position="277"/>
        <end position="347"/>
    </location>
</feature>
<feature type="domain" description="S1 motif 5" evidence="1">
    <location>
        <begin position="364"/>
        <end position="434"/>
    </location>
</feature>
<feature type="domain" description="S1 motif 6" evidence="1">
    <location>
        <begin position="451"/>
        <end position="520"/>
    </location>
</feature>
<feature type="binding site" description="covalent" evidence="18">
    <location>
        <position position="139"/>
    </location>
    <ligand>
        <name>RNA</name>
        <dbReference type="ChEBI" id="CHEBI:33697"/>
    </ligand>
</feature>
<feature type="binding site" description="covalent" evidence="18">
    <location>
        <position position="142"/>
    </location>
    <ligand>
        <name>RNA</name>
        <dbReference type="ChEBI" id="CHEBI:33697"/>
    </ligand>
</feature>
<feature type="modified residue" description="N6-acetyllysine" evidence="10">
    <location>
        <position position="229"/>
    </location>
</feature>
<feature type="modified residue" description="N6-acetyllysine" evidence="10">
    <location>
        <position position="279"/>
    </location>
</feature>
<feature type="modified residue" description="N6-acetyllysine" evidence="10">
    <location>
        <position position="363"/>
    </location>
</feature>
<feature type="mutagenesis site" description="Loss of RNAylation by T4 ADP-ribosyltransferase ModB." evidence="18">
    <original>R</original>
    <variation>A</variation>
    <variation>K</variation>
    <location>
        <position position="139"/>
    </location>
</feature>
<feature type="mutagenesis site" description="Decreased binding of Q beta-derived M-site RNA, 80% synthesis of (-) strand RNA, in construct expressing residues 1-273." evidence="15">
    <original>Y</original>
    <variation>A</variation>
    <location>
        <position position="205"/>
    </location>
</feature>
<feature type="mutagenesis site" description="Decreased binding of Q beta-derived M-site RNA, 50% synthesis of (-) strand RNA, in construct expressing residues 1-273." evidence="15">
    <original>F</original>
    <variation>A</variation>
    <location>
        <position position="208"/>
    </location>
</feature>
<feature type="mutagenesis site" description="Decreased binding of Q beta-derived M-site RNA, 40% synthesis of (-) strand RNA, in construct expressing residues 1-273." evidence="15">
    <original>H</original>
    <variation>A</variation>
    <location>
        <position position="219"/>
    </location>
</feature>
<feature type="mutagenesis site" description="Decreased binding of Q beta-derived M-site RNA, 40% synthesis of (-) strand RNA, in construct expressing residues 1-273." evidence="15">
    <original>R</original>
    <variation>A</variation>
    <location>
        <position position="254"/>
    </location>
</feature>
<feature type="sequence conflict" description="In Ref. 1; AA sequence." evidence="29" ref="1">
    <original>N</original>
    <variation>D</variation>
    <location>
        <position position="125"/>
    </location>
</feature>
<feature type="sequence conflict" description="In Ref. 1; CAA23630 and 2; CAA23644." evidence="29" ref="1 2">
    <original>ER</original>
    <variation>D</variation>
    <location>
        <begin position="181"/>
        <end position="182"/>
    </location>
</feature>
<feature type="helix" evidence="33">
    <location>
        <begin position="4"/>
        <end position="18"/>
    </location>
</feature>
<feature type="strand" evidence="33">
    <location>
        <begin position="21"/>
        <end position="31"/>
    </location>
</feature>
<feature type="strand" evidence="33">
    <location>
        <begin position="36"/>
        <end position="39"/>
    </location>
</feature>
<feature type="strand" evidence="33">
    <location>
        <begin position="41"/>
        <end position="44"/>
    </location>
</feature>
<feature type="strand" evidence="33">
    <location>
        <begin position="46"/>
        <end position="48"/>
    </location>
</feature>
<feature type="strand" evidence="33">
    <location>
        <begin position="53"/>
        <end position="56"/>
    </location>
</feature>
<feature type="turn" evidence="33">
    <location>
        <begin position="59"/>
        <end position="61"/>
    </location>
</feature>
<feature type="strand" evidence="33">
    <location>
        <begin position="67"/>
        <end position="71"/>
    </location>
</feature>
<feature type="helix" evidence="33">
    <location>
        <begin position="79"/>
        <end position="82"/>
    </location>
</feature>
<feature type="helix" evidence="33">
    <location>
        <begin position="85"/>
        <end position="101"/>
    </location>
</feature>
<feature type="turn" evidence="33">
    <location>
        <begin position="102"/>
        <end position="105"/>
    </location>
</feature>
<feature type="strand" evidence="33">
    <location>
        <begin position="107"/>
        <end position="115"/>
    </location>
</feature>
<feature type="strand" evidence="33">
    <location>
        <begin position="117"/>
        <end position="124"/>
    </location>
</feature>
<feature type="strand" evidence="33">
    <location>
        <begin position="127"/>
        <end position="133"/>
    </location>
</feature>
<feature type="helix" evidence="33">
    <location>
        <begin position="143"/>
        <end position="145"/>
    </location>
</feature>
<feature type="turn" evidence="34">
    <location>
        <begin position="147"/>
        <end position="149"/>
    </location>
</feature>
<feature type="strand" evidence="33">
    <location>
        <begin position="151"/>
        <end position="159"/>
    </location>
</feature>
<feature type="strand" evidence="33">
    <location>
        <begin position="161"/>
        <end position="163"/>
    </location>
</feature>
<feature type="strand" evidence="33">
    <location>
        <begin position="166"/>
        <end position="170"/>
    </location>
</feature>
<feature type="helix" evidence="33">
    <location>
        <begin position="171"/>
        <end position="175"/>
    </location>
</feature>
<feature type="strand" evidence="31">
    <location>
        <begin position="279"/>
        <end position="288"/>
    </location>
</feature>
<feature type="strand" evidence="31">
    <location>
        <begin position="291"/>
        <end position="295"/>
    </location>
</feature>
<feature type="strand" evidence="31">
    <location>
        <begin position="301"/>
        <end position="305"/>
    </location>
</feature>
<feature type="strand" evidence="31">
    <location>
        <begin position="308"/>
        <end position="310"/>
    </location>
</feature>
<feature type="turn" evidence="31">
    <location>
        <begin position="319"/>
        <end position="321"/>
    </location>
</feature>
<feature type="strand" evidence="31">
    <location>
        <begin position="327"/>
        <end position="333"/>
    </location>
</feature>
<feature type="turn" evidence="31">
    <location>
        <begin position="337"/>
        <end position="339"/>
    </location>
</feature>
<feature type="helix" evidence="35">
    <location>
        <begin position="354"/>
        <end position="357"/>
    </location>
</feature>
<feature type="helix" evidence="35">
    <location>
        <begin position="359"/>
        <end position="361"/>
    </location>
</feature>
<feature type="strand" evidence="35">
    <location>
        <begin position="364"/>
        <end position="368"/>
    </location>
</feature>
<feature type="strand" evidence="35">
    <location>
        <begin position="375"/>
        <end position="377"/>
    </location>
</feature>
<feature type="strand" evidence="35">
    <location>
        <begin position="384"/>
        <end position="386"/>
    </location>
</feature>
<feature type="helix" evidence="35">
    <location>
        <begin position="392"/>
        <end position="395"/>
    </location>
</feature>
<feature type="strand" evidence="35">
    <location>
        <begin position="398"/>
        <end position="400"/>
    </location>
</feature>
<feature type="helix" evidence="35">
    <location>
        <begin position="402"/>
        <end position="405"/>
    </location>
</feature>
<feature type="helix" evidence="35">
    <location>
        <begin position="406"/>
        <end position="408"/>
    </location>
</feature>
<feature type="strand" evidence="35">
    <location>
        <begin position="416"/>
        <end position="422"/>
    </location>
</feature>
<feature type="turn" evidence="35">
    <location>
        <begin position="424"/>
        <end position="426"/>
    </location>
</feature>
<feature type="strand" evidence="35">
    <location>
        <begin position="429"/>
        <end position="432"/>
    </location>
</feature>
<feature type="helix" evidence="35">
    <location>
        <begin position="433"/>
        <end position="436"/>
    </location>
</feature>
<feature type="helix" evidence="32">
    <location>
        <begin position="441"/>
        <end position="444"/>
    </location>
</feature>
<feature type="turn" evidence="32">
    <location>
        <begin position="445"/>
        <end position="447"/>
    </location>
</feature>
<feature type="strand" evidence="32">
    <location>
        <begin position="450"/>
        <end position="461"/>
    </location>
</feature>
<feature type="strand" evidence="32">
    <location>
        <begin position="466"/>
        <end position="469"/>
    </location>
</feature>
<feature type="strand" evidence="32">
    <location>
        <begin position="485"/>
        <end position="490"/>
    </location>
</feature>
<feature type="helix" evidence="32">
    <location>
        <begin position="491"/>
        <end position="493"/>
    </location>
</feature>
<feature type="strand" evidence="32">
    <location>
        <begin position="500"/>
        <end position="509"/>
    </location>
</feature>
<feature type="turn" evidence="32">
    <location>
        <begin position="510"/>
        <end position="513"/>
    </location>
</feature>
<feature type="strand" evidence="32">
    <location>
        <begin position="514"/>
        <end position="518"/>
    </location>
</feature>
<feature type="strand" evidence="32">
    <location>
        <begin position="521"/>
        <end position="524"/>
    </location>
</feature>
<organism>
    <name type="scientific">Escherichia coli (strain K12)</name>
    <dbReference type="NCBI Taxonomy" id="83333"/>
    <lineage>
        <taxon>Bacteria</taxon>
        <taxon>Pseudomonadati</taxon>
        <taxon>Pseudomonadota</taxon>
        <taxon>Gammaproteobacteria</taxon>
        <taxon>Enterobacterales</taxon>
        <taxon>Enterobacteriaceae</taxon>
        <taxon>Escherichia</taxon>
    </lineage>
</organism>
<sequence>MTESFAQLFEESLKEIETRPGSIVRGVVVAIDKDVVLVDAGLKSESAIPAEQFKNAQGELEIQVGDEVDVALDAVEDGFGETLLSREKAKRHEAWITLEKAYEDAETVTGVINGKVKGGFTVELNGIRAFLPGSLVDVRPVRDTLHLEGKELEFKVIKLDQKRNNVVVSRRAVIESENSAERDQLLENLQEGMEVKGIVKNLTDYGAFVDLGGVDGLLHITDMAWKRVKHPSEIVNVGDEITVKVLKFDRERTRVSLGLKQLGEDPWVAIAKRYPEGTKLTGRVTNLTDYGCFVEIEEGVEGLVHVSEMDWTNKNIHPSKVVNVGDVVEVMVLDIDEERRRISLGLKQCKANPWQQFAETHNKGDRVEGKIKSITDFGIFIGLDGGIDGLVHLSDISWNVAGEEAVREYKKGDEIAAVVLQVDAERERISLGVKQLAEDPFNNWVALNKKGAIVTGKVTAVDAKGATVELADGVEGYLRASEASRDRVEDATLVLSVGDEVEAKFTGVDRKNRAISLSVRAKDEADEKDAIATVNKQEDANFSNNAMAEAFKAAKGE</sequence>
<gene>
    <name type="primary">rpsA</name>
    <name type="synonym">ssyF</name>
    <name type="ordered locus">b0911</name>
    <name type="ordered locus">JW0894</name>
</gene>
<accession>P0AG67</accession>
<accession>P02349</accession>
<accession>P77352</accession>
<evidence type="ECO:0000255" key="1">
    <source>
        <dbReference type="PROSITE-ProRule" id="PRU00180"/>
    </source>
</evidence>
<evidence type="ECO:0000269" key="2">
    <source>
    </source>
</evidence>
<evidence type="ECO:0000269" key="3">
    <source>
    </source>
</evidence>
<evidence type="ECO:0000269" key="4">
    <source>
    </source>
</evidence>
<evidence type="ECO:0000269" key="5">
    <source>
    </source>
</evidence>
<evidence type="ECO:0000269" key="6">
    <source>
    </source>
</evidence>
<evidence type="ECO:0000269" key="7">
    <source>
    </source>
</evidence>
<evidence type="ECO:0000269" key="8">
    <source>
    </source>
</evidence>
<evidence type="ECO:0000269" key="9">
    <source>
    </source>
</evidence>
<evidence type="ECO:0000269" key="10">
    <source>
    </source>
</evidence>
<evidence type="ECO:0000269" key="11">
    <source>
    </source>
</evidence>
<evidence type="ECO:0000269" key="12">
    <source>
    </source>
</evidence>
<evidence type="ECO:0000269" key="13">
    <source>
    </source>
</evidence>
<evidence type="ECO:0000269" key="14">
    <source>
    </source>
</evidence>
<evidence type="ECO:0000269" key="15">
    <source>
    </source>
</evidence>
<evidence type="ECO:0000269" key="16">
    <source>
    </source>
</evidence>
<evidence type="ECO:0000269" key="17">
    <source>
    </source>
</evidence>
<evidence type="ECO:0000269" key="18">
    <source>
    </source>
</evidence>
<evidence type="ECO:0000269" key="19">
    <source>
    </source>
</evidence>
<evidence type="ECO:0000269" key="20">
    <source>
    </source>
</evidence>
<evidence type="ECO:0000269" key="21">
    <source>
    </source>
</evidence>
<evidence type="ECO:0000269" key="22">
    <source>
    </source>
</evidence>
<evidence type="ECO:0000269" key="23">
    <source>
    </source>
</evidence>
<evidence type="ECO:0000269" key="24">
    <source>
    </source>
</evidence>
<evidence type="ECO:0000269" key="25">
    <source>
    </source>
</evidence>
<evidence type="ECO:0000269" key="26">
    <source>
    </source>
</evidence>
<evidence type="ECO:0000303" key="27">
    <source>
    </source>
</evidence>
<evidence type="ECO:0000303" key="28">
    <source>
    </source>
</evidence>
<evidence type="ECO:0000305" key="29"/>
<evidence type="ECO:0007744" key="30">
    <source>
        <dbReference type="PDB" id="7QGH"/>
    </source>
</evidence>
<evidence type="ECO:0007829" key="31">
    <source>
        <dbReference type="PDB" id="2KHI"/>
    </source>
</evidence>
<evidence type="ECO:0007829" key="32">
    <source>
        <dbReference type="PDB" id="2KHJ"/>
    </source>
</evidence>
<evidence type="ECO:0007829" key="33">
    <source>
        <dbReference type="PDB" id="4Q7J"/>
    </source>
</evidence>
<evidence type="ECO:0007829" key="34">
    <source>
        <dbReference type="PDB" id="4R71"/>
    </source>
</evidence>
<evidence type="ECO:0007829" key="35">
    <source>
        <dbReference type="PDB" id="5XQ5"/>
    </source>
</evidence>
<keyword id="KW-0002">3D-structure</keyword>
<keyword id="KW-0007">Acetylation</keyword>
<keyword id="KW-0143">Chaperone</keyword>
<keyword id="KW-0963">Cytoplasm</keyword>
<keyword id="KW-0903">Direct protein sequencing</keyword>
<keyword id="KW-0597">Phosphoprotein</keyword>
<keyword id="KW-1185">Reference proteome</keyword>
<keyword id="KW-0677">Repeat</keyword>
<keyword id="KW-0678">Repressor</keyword>
<keyword id="KW-0687">Ribonucleoprotein</keyword>
<keyword id="KW-0689">Ribosomal protein</keyword>
<keyword id="KW-0694">RNA-binding</keyword>